<sequence length="601" mass="68307">MAALTPRKRKQDSLKCDSLLHFTENLFPSPNKKHCFYQNSDKNEENLHCSQQEHFVLSALKTTEINRLPSANQGSPFKSALSTVSFYNQNKWYLNPLERKLIKESRSTCLKTNDEDKSFPIVTEKMQGKPVCSKKNNKKPQKSLTAKYQPKYRHIKPVSRNSRNSKQNRVIYKPIVEKENNCHSAENNSNAPRVLSQKIKPQVTLQGGAAFFVRKKSSLRKSSLENEPSLGRTQKSKSEVIEDSDVETVSEKKTFATRQVPKCLVLEEKLKIGLLSASSKNKEKLIKDSSDDRVSSKEHKVDKNEAFSSEDSLGENKTISPKSTVYPIFSASSVNSKRSLGEEQFSVGSVNFMKQTNIQKNTNTRDTSKKTKDQLIIDAGQKHFGATVCKSCGMIYTASNPEDEMQHVQHHHRFLEGIKYVGWKKERVVAEFWDGKIVLVLPHDPSFAIKKVEDVQELVDNELGFQQVVPKCPNKIKTFLFISDEKRVVGCLIAEPIKQAFRVLSEPIGPESPSSTECPRAWQCSDVPEPAVCGISRIWVFRLKRRKRIARRLVDTLRNCFMFGCFLSTDEIAFSDPTPDGKLFATKYCNTPNFLVYNFNS</sequence>
<feature type="chain" id="PRO_0000074542" description="N-acetyltransferase ESCO2">
    <location>
        <begin position="1"/>
        <end position="601"/>
    </location>
</feature>
<feature type="zinc finger region" description="CCHH-type">
    <location>
        <begin position="387"/>
        <end position="411"/>
    </location>
</feature>
<feature type="region of interest" description="Disordered" evidence="1">
    <location>
        <begin position="222"/>
        <end position="243"/>
    </location>
</feature>
<feature type="region of interest" description="Disordered" evidence="1">
    <location>
        <begin position="282"/>
        <end position="315"/>
    </location>
</feature>
<feature type="compositionally biased region" description="Basic and acidic residues" evidence="1">
    <location>
        <begin position="282"/>
        <end position="305"/>
    </location>
</feature>
<feature type="compositionally biased region" description="Polar residues" evidence="1">
    <location>
        <begin position="306"/>
        <end position="315"/>
    </location>
</feature>
<feature type="modified residue" description="Phosphoserine" evidence="13 16">
    <location>
        <position position="29"/>
    </location>
</feature>
<feature type="modified residue" description="Phosphoserine" evidence="14 15 16">
    <location>
        <position position="75"/>
    </location>
</feature>
<feature type="modified residue" description="Phosphoserine" evidence="16">
    <location>
        <position position="223"/>
    </location>
</feature>
<feature type="modified residue" description="Phosphoserine" evidence="14 15 16">
    <location>
        <position position="244"/>
    </location>
</feature>
<feature type="modified residue" description="Phosphoserine" evidence="16">
    <location>
        <position position="312"/>
    </location>
</feature>
<feature type="modified residue" description="Phosphoserine" evidence="16">
    <location>
        <position position="512"/>
    </location>
</feature>
<feature type="splice variant" id="VSP_055773" description="In isoform 2." evidence="9">
    <location>
        <begin position="1"/>
        <end position="352"/>
    </location>
</feature>
<feature type="splice variant" id="VSP_055774" description="In isoform 2." evidence="9">
    <original>GKLFATKYCNTPNFLVYNFNS</original>
    <variation>DCRRLNRYQET</variation>
    <location>
        <begin position="581"/>
        <end position="601"/>
    </location>
</feature>
<feature type="sequence variant" id="VAR_033840" description="In dbSNP:rs4732748.">
    <original>A</original>
    <variation>V</variation>
    <location>
        <position position="80"/>
    </location>
</feature>
<feature type="sequence variant" id="VAR_060994" description="In dbSNP:rs57479434.">
    <original>Q</original>
    <variation>P</variation>
    <location>
        <position position="359"/>
    </location>
</feature>
<feature type="sequence variant" id="VAR_022649" description="In RBS; dbSNP:rs80359868." evidence="2">
    <original>W</original>
    <variation>G</variation>
    <location>
        <position position="539"/>
    </location>
</feature>
<feature type="sequence variant" id="VAR_085392" description="In JHS; strongly decreased protein levels." evidence="8">
    <location>
        <begin position="552"/>
        <end position="601"/>
    </location>
</feature>
<protein>
    <recommendedName>
        <fullName evidence="11">N-acetyltransferase ESCO2</fullName>
        <ecNumber evidence="3">2.3.1.-</ecNumber>
    </recommendedName>
    <alternativeName>
        <fullName>Establishment factor-like protein 2</fullName>
        <shortName evidence="10">EFO2</shortName>
        <shortName>EFO2p</shortName>
        <shortName>hEFO2</shortName>
    </alternativeName>
    <alternativeName>
        <fullName>Establishment of cohesion 1 homolog 2</fullName>
        <shortName>ECO1 homolog 2</shortName>
    </alternativeName>
</protein>
<reference key="1">
    <citation type="journal article" date="2005" name="Nat. Genet.">
        <title>Roberts syndrome is caused by mutations in ESCO2, a human homolog of yeast ECO1 that is essential for the establishment of sister chromatid cohesion.</title>
        <authorList>
            <person name="Vega H."/>
            <person name="Waisfisz Q."/>
            <person name="Gordillo M."/>
            <person name="Sakai N."/>
            <person name="Yanagihara I."/>
            <person name="Yamada M."/>
            <person name="van Gosliga D."/>
            <person name="Kayserili H."/>
            <person name="Xu C."/>
            <person name="Ozono K."/>
            <person name="Wang Jabs E."/>
            <person name="Inui K."/>
            <person name="Joenje H."/>
        </authorList>
    </citation>
    <scope>NUCLEOTIDE SEQUENCE [MRNA] (ISOFORM 1)</scope>
    <scope>FUNCTION</scope>
    <scope>TISSUE SPECIFICITY</scope>
    <scope>VARIANT RBS GLY-539</scope>
</reference>
<reference key="2">
    <citation type="journal article" date="2004" name="Nat. Genet.">
        <title>Complete sequencing and characterization of 21,243 full-length human cDNAs.</title>
        <authorList>
            <person name="Ota T."/>
            <person name="Suzuki Y."/>
            <person name="Nishikawa T."/>
            <person name="Otsuki T."/>
            <person name="Sugiyama T."/>
            <person name="Irie R."/>
            <person name="Wakamatsu A."/>
            <person name="Hayashi K."/>
            <person name="Sato H."/>
            <person name="Nagai K."/>
            <person name="Kimura K."/>
            <person name="Makita H."/>
            <person name="Sekine M."/>
            <person name="Obayashi M."/>
            <person name="Nishi T."/>
            <person name="Shibahara T."/>
            <person name="Tanaka T."/>
            <person name="Ishii S."/>
            <person name="Yamamoto J."/>
            <person name="Saito K."/>
            <person name="Kawai Y."/>
            <person name="Isono Y."/>
            <person name="Nakamura Y."/>
            <person name="Nagahari K."/>
            <person name="Murakami K."/>
            <person name="Yasuda T."/>
            <person name="Iwayanagi T."/>
            <person name="Wagatsuma M."/>
            <person name="Shiratori A."/>
            <person name="Sudo H."/>
            <person name="Hosoiri T."/>
            <person name="Kaku Y."/>
            <person name="Kodaira H."/>
            <person name="Kondo H."/>
            <person name="Sugawara M."/>
            <person name="Takahashi M."/>
            <person name="Kanda K."/>
            <person name="Yokoi T."/>
            <person name="Furuya T."/>
            <person name="Kikkawa E."/>
            <person name="Omura Y."/>
            <person name="Abe K."/>
            <person name="Kamihara K."/>
            <person name="Katsuta N."/>
            <person name="Sato K."/>
            <person name="Tanikawa M."/>
            <person name="Yamazaki M."/>
            <person name="Ninomiya K."/>
            <person name="Ishibashi T."/>
            <person name="Yamashita H."/>
            <person name="Murakawa K."/>
            <person name="Fujimori K."/>
            <person name="Tanai H."/>
            <person name="Kimata M."/>
            <person name="Watanabe M."/>
            <person name="Hiraoka S."/>
            <person name="Chiba Y."/>
            <person name="Ishida S."/>
            <person name="Ono Y."/>
            <person name="Takiguchi S."/>
            <person name="Watanabe S."/>
            <person name="Yosida M."/>
            <person name="Hotuta T."/>
            <person name="Kusano J."/>
            <person name="Kanehori K."/>
            <person name="Takahashi-Fujii A."/>
            <person name="Hara H."/>
            <person name="Tanase T.-O."/>
            <person name="Nomura Y."/>
            <person name="Togiya S."/>
            <person name="Komai F."/>
            <person name="Hara R."/>
            <person name="Takeuchi K."/>
            <person name="Arita M."/>
            <person name="Imose N."/>
            <person name="Musashino K."/>
            <person name="Yuuki H."/>
            <person name="Oshima A."/>
            <person name="Sasaki N."/>
            <person name="Aotsuka S."/>
            <person name="Yoshikawa Y."/>
            <person name="Matsunawa H."/>
            <person name="Ichihara T."/>
            <person name="Shiohata N."/>
            <person name="Sano S."/>
            <person name="Moriya S."/>
            <person name="Momiyama H."/>
            <person name="Satoh N."/>
            <person name="Takami S."/>
            <person name="Terashima Y."/>
            <person name="Suzuki O."/>
            <person name="Nakagawa S."/>
            <person name="Senoh A."/>
            <person name="Mizoguchi H."/>
            <person name="Goto Y."/>
            <person name="Shimizu F."/>
            <person name="Wakebe H."/>
            <person name="Hishigaki H."/>
            <person name="Watanabe T."/>
            <person name="Sugiyama A."/>
            <person name="Takemoto M."/>
            <person name="Kawakami B."/>
            <person name="Yamazaki M."/>
            <person name="Watanabe K."/>
            <person name="Kumagai A."/>
            <person name="Itakura S."/>
            <person name="Fukuzumi Y."/>
            <person name="Fujimori Y."/>
            <person name="Komiyama M."/>
            <person name="Tashiro H."/>
            <person name="Tanigami A."/>
            <person name="Fujiwara T."/>
            <person name="Ono T."/>
            <person name="Yamada K."/>
            <person name="Fujii Y."/>
            <person name="Ozaki K."/>
            <person name="Hirao M."/>
            <person name="Ohmori Y."/>
            <person name="Kawabata A."/>
            <person name="Hikiji T."/>
            <person name="Kobatake N."/>
            <person name="Inagaki H."/>
            <person name="Ikema Y."/>
            <person name="Okamoto S."/>
            <person name="Okitani R."/>
            <person name="Kawakami T."/>
            <person name="Noguchi S."/>
            <person name="Itoh T."/>
            <person name="Shigeta K."/>
            <person name="Senba T."/>
            <person name="Matsumura K."/>
            <person name="Nakajima Y."/>
            <person name="Mizuno T."/>
            <person name="Morinaga M."/>
            <person name="Sasaki M."/>
            <person name="Togashi T."/>
            <person name="Oyama M."/>
            <person name="Hata H."/>
            <person name="Watanabe M."/>
            <person name="Komatsu T."/>
            <person name="Mizushima-Sugano J."/>
            <person name="Satoh T."/>
            <person name="Shirai Y."/>
            <person name="Takahashi Y."/>
            <person name="Nakagawa K."/>
            <person name="Okumura K."/>
            <person name="Nagase T."/>
            <person name="Nomura N."/>
            <person name="Kikuchi H."/>
            <person name="Masuho Y."/>
            <person name="Yamashita R."/>
            <person name="Nakai K."/>
            <person name="Yada T."/>
            <person name="Nakamura Y."/>
            <person name="Ohara O."/>
            <person name="Isogai T."/>
            <person name="Sugano S."/>
        </authorList>
    </citation>
    <scope>NUCLEOTIDE SEQUENCE [LARGE SCALE MRNA] (ISOFORM 1)</scope>
    <source>
        <tissue>Thymus</tissue>
    </source>
</reference>
<reference key="3">
    <citation type="journal article" date="2006" name="Nature">
        <title>DNA sequence and analysis of human chromosome 8.</title>
        <authorList>
            <person name="Nusbaum C."/>
            <person name="Mikkelsen T.S."/>
            <person name="Zody M.C."/>
            <person name="Asakawa S."/>
            <person name="Taudien S."/>
            <person name="Garber M."/>
            <person name="Kodira C.D."/>
            <person name="Schueler M.G."/>
            <person name="Shimizu A."/>
            <person name="Whittaker C.A."/>
            <person name="Chang J.L."/>
            <person name="Cuomo C.A."/>
            <person name="Dewar K."/>
            <person name="FitzGerald M.G."/>
            <person name="Yang X."/>
            <person name="Allen N.R."/>
            <person name="Anderson S."/>
            <person name="Asakawa T."/>
            <person name="Blechschmidt K."/>
            <person name="Bloom T."/>
            <person name="Borowsky M.L."/>
            <person name="Butler J."/>
            <person name="Cook A."/>
            <person name="Corum B."/>
            <person name="DeArellano K."/>
            <person name="DeCaprio D."/>
            <person name="Dooley K.T."/>
            <person name="Dorris L. III"/>
            <person name="Engels R."/>
            <person name="Gloeckner G."/>
            <person name="Hafez N."/>
            <person name="Hagopian D.S."/>
            <person name="Hall J.L."/>
            <person name="Ishikawa S.K."/>
            <person name="Jaffe D.B."/>
            <person name="Kamat A."/>
            <person name="Kudoh J."/>
            <person name="Lehmann R."/>
            <person name="Lokitsang T."/>
            <person name="Macdonald P."/>
            <person name="Major J.E."/>
            <person name="Matthews C.D."/>
            <person name="Mauceli E."/>
            <person name="Menzel U."/>
            <person name="Mihalev A.H."/>
            <person name="Minoshima S."/>
            <person name="Murayama Y."/>
            <person name="Naylor J.W."/>
            <person name="Nicol R."/>
            <person name="Nguyen C."/>
            <person name="O'Leary S.B."/>
            <person name="O'Neill K."/>
            <person name="Parker S.C.J."/>
            <person name="Polley A."/>
            <person name="Raymond C.K."/>
            <person name="Reichwald K."/>
            <person name="Rodriguez J."/>
            <person name="Sasaki T."/>
            <person name="Schilhabel M."/>
            <person name="Siddiqui R."/>
            <person name="Smith C.L."/>
            <person name="Sneddon T.P."/>
            <person name="Talamas J.A."/>
            <person name="Tenzin P."/>
            <person name="Topham K."/>
            <person name="Venkataraman V."/>
            <person name="Wen G."/>
            <person name="Yamazaki S."/>
            <person name="Young S.K."/>
            <person name="Zeng Q."/>
            <person name="Zimmer A.R."/>
            <person name="Rosenthal A."/>
            <person name="Birren B.W."/>
            <person name="Platzer M."/>
            <person name="Shimizu N."/>
            <person name="Lander E.S."/>
        </authorList>
    </citation>
    <scope>NUCLEOTIDE SEQUENCE [LARGE SCALE GENOMIC DNA]</scope>
</reference>
<reference key="4">
    <citation type="journal article" date="2004" name="Genome Res.">
        <title>The status, quality, and expansion of the NIH full-length cDNA project: the Mammalian Gene Collection (MGC).</title>
        <authorList>
            <consortium name="The MGC Project Team"/>
        </authorList>
    </citation>
    <scope>NUCLEOTIDE SEQUENCE [LARGE SCALE MRNA] (ISOFORM 2)</scope>
    <source>
        <tissue>Testis</tissue>
    </source>
</reference>
<reference key="5">
    <citation type="journal article" date="2005" name="Mol. Biol. Cell">
        <title>Two human orthologues of Eco1/Ctf7 acetyltransferases are both required for proper sister-chromatid cohesion.</title>
        <authorList>
            <person name="Hou F."/>
            <person name="Zou H."/>
        </authorList>
    </citation>
    <scope>FUNCTION</scope>
    <scope>CATALYTIC ACTIVITY</scope>
    <scope>SUBCELLULAR LOCATION</scope>
    <scope>DEVELOPMENTAL STAGE</scope>
</reference>
<reference key="6">
    <citation type="journal article" date="2006" name="Cell">
        <title>Global, in vivo, and site-specific phosphorylation dynamics in signaling networks.</title>
        <authorList>
            <person name="Olsen J.V."/>
            <person name="Blagoev B."/>
            <person name="Gnad F."/>
            <person name="Macek B."/>
            <person name="Kumar C."/>
            <person name="Mortensen P."/>
            <person name="Mann M."/>
        </authorList>
    </citation>
    <scope>PHOSPHORYLATION [LARGE SCALE ANALYSIS] AT SER-29</scope>
    <scope>IDENTIFICATION BY MASS SPECTROMETRY [LARGE SCALE ANALYSIS]</scope>
    <source>
        <tissue>Cervix carcinoma</tissue>
    </source>
</reference>
<reference key="7">
    <citation type="journal article" date="2008" name="J. Proteome Res.">
        <title>Combining protein-based IMAC, peptide-based IMAC, and MudPIT for efficient phosphoproteomic analysis.</title>
        <authorList>
            <person name="Cantin G.T."/>
            <person name="Yi W."/>
            <person name="Lu B."/>
            <person name="Park S.K."/>
            <person name="Xu T."/>
            <person name="Lee J.-D."/>
            <person name="Yates J.R. III"/>
        </authorList>
    </citation>
    <scope>IDENTIFICATION BY MASS SPECTROMETRY [LARGE SCALE ANALYSIS]</scope>
    <source>
        <tissue>Cervix carcinoma</tissue>
    </source>
</reference>
<reference key="8">
    <citation type="journal article" date="2008" name="Proc. Natl. Acad. Sci. U.S.A.">
        <title>A quantitative atlas of mitotic phosphorylation.</title>
        <authorList>
            <person name="Dephoure N."/>
            <person name="Zhou C."/>
            <person name="Villen J."/>
            <person name="Beausoleil S.A."/>
            <person name="Bakalarski C.E."/>
            <person name="Elledge S.J."/>
            <person name="Gygi S.P."/>
        </authorList>
    </citation>
    <scope>PHOSPHORYLATION [LARGE SCALE ANALYSIS] AT SER-75 AND SER-244</scope>
    <scope>IDENTIFICATION BY MASS SPECTROMETRY [LARGE SCALE ANALYSIS]</scope>
    <source>
        <tissue>Cervix carcinoma</tissue>
    </source>
</reference>
<reference key="9">
    <citation type="journal article" date="2009" name="Anal. Chem.">
        <title>Lys-N and trypsin cover complementary parts of the phosphoproteome in a refined SCX-based approach.</title>
        <authorList>
            <person name="Gauci S."/>
            <person name="Helbig A.O."/>
            <person name="Slijper M."/>
            <person name="Krijgsveld J."/>
            <person name="Heck A.J."/>
            <person name="Mohammed S."/>
        </authorList>
    </citation>
    <scope>IDENTIFICATION BY MASS SPECTROMETRY [LARGE SCALE ANALYSIS]</scope>
</reference>
<reference key="10">
    <citation type="journal article" date="2009" name="Nature">
        <title>Cohesin acetylation speeds the replication fork.</title>
        <authorList>
            <person name="Terret M.E."/>
            <person name="Sherwood R."/>
            <person name="Rahman S."/>
            <person name="Qin J."/>
            <person name="Jallepalli P.V."/>
        </authorList>
    </citation>
    <scope>FUNCTION</scope>
    <scope>SUBCELLULAR LOCATION</scope>
</reference>
<reference key="11">
    <citation type="journal article" date="2010" name="Cell">
        <title>Sororin mediates sister chromatid cohesion by antagonizing wapl.</title>
        <authorList>
            <person name="Nishiyama T."/>
            <person name="Ladurner R."/>
            <person name="Schmitz J."/>
            <person name="Kreidl E."/>
            <person name="Schleiffer A."/>
            <person name="Bhaskara V."/>
            <person name="Bando M."/>
            <person name="Shirahige K."/>
            <person name="Hyman A.A."/>
            <person name="Mechtler K."/>
            <person name="Peters J.M."/>
        </authorList>
    </citation>
    <scope>FUNCTION</scope>
</reference>
<reference key="12">
    <citation type="journal article" date="2010" name="Sci. Signal.">
        <title>Quantitative phosphoproteomics reveals widespread full phosphorylation site occupancy during mitosis.</title>
        <authorList>
            <person name="Olsen J.V."/>
            <person name="Vermeulen M."/>
            <person name="Santamaria A."/>
            <person name="Kumar C."/>
            <person name="Miller M.L."/>
            <person name="Jensen L.J."/>
            <person name="Gnad F."/>
            <person name="Cox J."/>
            <person name="Jensen T.S."/>
            <person name="Nigg E.A."/>
            <person name="Brunak S."/>
            <person name="Mann M."/>
        </authorList>
    </citation>
    <scope>PHOSPHORYLATION [LARGE SCALE ANALYSIS] AT SER-75 AND SER-244</scope>
    <scope>IDENTIFICATION BY MASS SPECTROMETRY [LARGE SCALE ANALYSIS]</scope>
    <source>
        <tissue>Cervix carcinoma</tissue>
    </source>
</reference>
<reference key="13">
    <citation type="journal article" date="2013" name="J. Proteome Res.">
        <title>Toward a comprehensive characterization of a human cancer cell phosphoproteome.</title>
        <authorList>
            <person name="Zhou H."/>
            <person name="Di Palma S."/>
            <person name="Preisinger C."/>
            <person name="Peng M."/>
            <person name="Polat A.N."/>
            <person name="Heck A.J."/>
            <person name="Mohammed S."/>
        </authorList>
    </citation>
    <scope>PHOSPHORYLATION [LARGE SCALE ANALYSIS] AT SER-29; SER-75; SER-223; SER-244; SER-312 AND SER-512</scope>
    <scope>IDENTIFICATION BY MASS SPECTROMETRY [LARGE SCALE ANALYSIS]</scope>
    <source>
        <tissue>Cervix carcinoma</tissue>
        <tissue>Erythroleukemia</tissue>
    </source>
</reference>
<reference key="14">
    <citation type="journal article" date="2005" name="Am. J. Hum. Genet.">
        <title>Inactivating mutations in ESCO2 cause SC phocomelia and Roberts syndrome: no phenotype-genotype correlation.</title>
        <authorList>
            <person name="Schuele B."/>
            <person name="Oviedo A."/>
            <person name="Johnston K."/>
            <person name="Pai S."/>
            <person name="Francke U."/>
        </authorList>
    </citation>
    <scope>INVOLVEMENT IN RBS</scope>
</reference>
<reference key="15">
    <citation type="journal article" date="2020" name="Arch. Oral Biol.">
        <title>Juberg-Hayward syndrome and Roberts syndrome are allelic, caused by mutations in ESCO2.</title>
        <authorList>
            <person name="Kantaputra P.N."/>
            <person name="Dejkhamron P."/>
            <person name="Tongsima S."/>
            <person name="Ngamphiw C."/>
            <person name="Intachai W."/>
            <person name="Ngiwsara L."/>
            <person name="Sawangareetrakul P."/>
            <person name="Svasti J."/>
            <person name="Olsen B."/>
            <person name="Cairns J.R.K."/>
            <person name="Bumroongkit K."/>
        </authorList>
    </citation>
    <scope>VARIANT JHS 552-ARG--SER-601 DEL</scope>
    <scope>CHARACTERIZATION OF VARIANT JHS 552-ARG--SER-601 DEL</scope>
</reference>
<reference key="16">
    <citation type="journal article" date="2021" name="Eur. J. Orthod.">
        <title>Juberg-Hayward syndrome is a cohesinopathy, caused by mutation in ESCO2.</title>
        <authorList>
            <person name="Kantaputra P.N."/>
            <person name="Dejkhamron P."/>
            <person name="Intachai W."/>
            <person name="Ngamphiw C."/>
            <person name="Kawasaki K."/>
            <person name="Ohazama A."/>
            <person name="Krisanaprakornkit S."/>
            <person name="Olsen B."/>
            <person name="Tongsima S."/>
            <person name="Ketudat Cairns J.R."/>
        </authorList>
    </citation>
    <scope>VARIANT JHS 552-ARG--SER-601 DEL</scope>
</reference>
<organism>
    <name type="scientific">Homo sapiens</name>
    <name type="common">Human</name>
    <dbReference type="NCBI Taxonomy" id="9606"/>
    <lineage>
        <taxon>Eukaryota</taxon>
        <taxon>Metazoa</taxon>
        <taxon>Chordata</taxon>
        <taxon>Craniata</taxon>
        <taxon>Vertebrata</taxon>
        <taxon>Euteleostomi</taxon>
        <taxon>Mammalia</taxon>
        <taxon>Eutheria</taxon>
        <taxon>Euarchontoglires</taxon>
        <taxon>Primates</taxon>
        <taxon>Haplorrhini</taxon>
        <taxon>Catarrhini</taxon>
        <taxon>Hominidae</taxon>
        <taxon>Homo</taxon>
    </lineage>
</organism>
<proteinExistence type="evidence at protein level"/>
<dbReference type="EC" id="2.3.1.-" evidence="3"/>
<dbReference type="EMBL" id="AY882862">
    <property type="protein sequence ID" value="AAX68677.1"/>
    <property type="molecule type" value="mRNA"/>
</dbReference>
<dbReference type="EMBL" id="AK124215">
    <property type="protein sequence ID" value="BAG54021.1"/>
    <property type="molecule type" value="mRNA"/>
</dbReference>
<dbReference type="EMBL" id="AC104997">
    <property type="status" value="NOT_ANNOTATED_CDS"/>
    <property type="molecule type" value="Genomic_DNA"/>
</dbReference>
<dbReference type="EMBL" id="BC034641">
    <property type="protein sequence ID" value="AAH34641.1"/>
    <property type="molecule type" value="mRNA"/>
</dbReference>
<dbReference type="CCDS" id="CCDS34872.1">
    <molecule id="Q56NI9-1"/>
</dbReference>
<dbReference type="RefSeq" id="NP_001017420.1">
    <molecule id="Q56NI9-1"/>
    <property type="nucleotide sequence ID" value="NM_001017420.3"/>
</dbReference>
<dbReference type="RefSeq" id="XP_011542723.1">
    <molecule id="Q56NI9-1"/>
    <property type="nucleotide sequence ID" value="XM_011544421.3"/>
</dbReference>
<dbReference type="RefSeq" id="XP_054215786.1">
    <molecule id="Q56NI9-1"/>
    <property type="nucleotide sequence ID" value="XM_054359811.1"/>
</dbReference>
<dbReference type="SMR" id="Q56NI9"/>
<dbReference type="BioGRID" id="127605">
    <property type="interactions" value="75"/>
</dbReference>
<dbReference type="FunCoup" id="Q56NI9">
    <property type="interactions" value="1680"/>
</dbReference>
<dbReference type="IntAct" id="Q56NI9">
    <property type="interactions" value="34"/>
</dbReference>
<dbReference type="MINT" id="Q56NI9"/>
<dbReference type="STRING" id="9606.ENSP00000306999"/>
<dbReference type="GlyGen" id="Q56NI9">
    <property type="glycosylation" value="1 site, 4 N-linked glycans (1 site)"/>
</dbReference>
<dbReference type="iPTMnet" id="Q56NI9"/>
<dbReference type="PhosphoSitePlus" id="Q56NI9"/>
<dbReference type="BioMuta" id="ESCO2"/>
<dbReference type="DMDM" id="67460434"/>
<dbReference type="jPOST" id="Q56NI9"/>
<dbReference type="MassIVE" id="Q56NI9"/>
<dbReference type="PaxDb" id="9606-ENSP00000306999"/>
<dbReference type="PeptideAtlas" id="Q56NI9"/>
<dbReference type="ProteomicsDB" id="62062"/>
<dbReference type="ProteomicsDB" id="62581">
    <molecule id="Q56NI9-1"/>
</dbReference>
<dbReference type="Pumba" id="Q56NI9"/>
<dbReference type="Antibodypedia" id="23057">
    <property type="antibodies" value="77 antibodies from 16 providers"/>
</dbReference>
<dbReference type="DNASU" id="157570"/>
<dbReference type="Ensembl" id="ENST00000305188.13">
    <molecule id="Q56NI9-1"/>
    <property type="protein sequence ID" value="ENSP00000306999.8"/>
    <property type="gene ID" value="ENSG00000171320.15"/>
</dbReference>
<dbReference type="Ensembl" id="ENST00000397418.4">
    <molecule id="Q56NI9-2"/>
    <property type="protein sequence ID" value="ENSP00000380563.2"/>
    <property type="gene ID" value="ENSG00000171320.15"/>
</dbReference>
<dbReference type="GeneID" id="157570"/>
<dbReference type="KEGG" id="hsa:157570"/>
<dbReference type="MANE-Select" id="ENST00000305188.13">
    <property type="protein sequence ID" value="ENSP00000306999.8"/>
    <property type="RefSeq nucleotide sequence ID" value="NM_001017420.3"/>
    <property type="RefSeq protein sequence ID" value="NP_001017420.1"/>
</dbReference>
<dbReference type="UCSC" id="uc003xgg.4">
    <molecule id="Q56NI9-1"/>
    <property type="organism name" value="human"/>
</dbReference>
<dbReference type="AGR" id="HGNC:27230"/>
<dbReference type="CTD" id="157570"/>
<dbReference type="DisGeNET" id="157570"/>
<dbReference type="GeneCards" id="ESCO2"/>
<dbReference type="GeneReviews" id="ESCO2"/>
<dbReference type="HGNC" id="HGNC:27230">
    <property type="gene designation" value="ESCO2"/>
</dbReference>
<dbReference type="HPA" id="ENSG00000171320">
    <property type="expression patterns" value="Tissue enhanced (bone marrow, intestine, lymphoid tissue)"/>
</dbReference>
<dbReference type="MalaCards" id="ESCO2"/>
<dbReference type="MIM" id="216100">
    <property type="type" value="phenotype"/>
</dbReference>
<dbReference type="MIM" id="268300">
    <property type="type" value="phenotype"/>
</dbReference>
<dbReference type="MIM" id="609353">
    <property type="type" value="gene"/>
</dbReference>
<dbReference type="neXtProt" id="NX_Q56NI9"/>
<dbReference type="OpenTargets" id="ENSG00000171320"/>
<dbReference type="Orphanet" id="2319">
    <property type="disease" value="Juberg-Hayward syndrome"/>
</dbReference>
<dbReference type="Orphanet" id="3103">
    <property type="disease" value="Roberts syndrome"/>
</dbReference>
<dbReference type="PharmGKB" id="PA134891970"/>
<dbReference type="VEuPathDB" id="HostDB:ENSG00000171320"/>
<dbReference type="eggNOG" id="KOG3014">
    <property type="taxonomic scope" value="Eukaryota"/>
</dbReference>
<dbReference type="GeneTree" id="ENSGT00940000158598"/>
<dbReference type="HOGENOM" id="CLU_031546_1_0_1"/>
<dbReference type="InParanoid" id="Q56NI9"/>
<dbReference type="OMA" id="FGTTVCK"/>
<dbReference type="OrthoDB" id="428854at2759"/>
<dbReference type="PAN-GO" id="Q56NI9">
    <property type="GO annotations" value="4 GO annotations based on evolutionary models"/>
</dbReference>
<dbReference type="PhylomeDB" id="Q56NI9"/>
<dbReference type="TreeFam" id="TF314027"/>
<dbReference type="PathwayCommons" id="Q56NI9"/>
<dbReference type="Reactome" id="R-HSA-2468052">
    <property type="pathway name" value="Establishment of Sister Chromatid Cohesion"/>
</dbReference>
<dbReference type="SignaLink" id="Q56NI9"/>
<dbReference type="BioGRID-ORCS" id="157570">
    <property type="hits" value="163 hits in 1159 CRISPR screens"/>
</dbReference>
<dbReference type="ChiTaRS" id="ESCO2">
    <property type="organism name" value="human"/>
</dbReference>
<dbReference type="GeneWiki" id="ESCO2"/>
<dbReference type="GenomeRNAi" id="157570"/>
<dbReference type="Pharos" id="Q56NI9">
    <property type="development level" value="Tbio"/>
</dbReference>
<dbReference type="PRO" id="PR:Q56NI9"/>
<dbReference type="Proteomes" id="UP000005640">
    <property type="component" value="Chromosome 8"/>
</dbReference>
<dbReference type="RNAct" id="Q56NI9">
    <property type="molecule type" value="protein"/>
</dbReference>
<dbReference type="Bgee" id="ENSG00000171320">
    <property type="expression patterns" value="Expressed in oocyte and 106 other cell types or tissues"/>
</dbReference>
<dbReference type="ExpressionAtlas" id="Q56NI9">
    <property type="expression patterns" value="baseline and differential"/>
</dbReference>
<dbReference type="GO" id="GO:0030054">
    <property type="term" value="C:cell junction"/>
    <property type="evidence" value="ECO:0000314"/>
    <property type="project" value="HPA"/>
</dbReference>
<dbReference type="GO" id="GO:0000785">
    <property type="term" value="C:chromatin"/>
    <property type="evidence" value="ECO:0000314"/>
    <property type="project" value="UniProtKB"/>
</dbReference>
<dbReference type="GO" id="GO:0010369">
    <property type="term" value="C:chromocenter"/>
    <property type="evidence" value="ECO:0007669"/>
    <property type="project" value="Ensembl"/>
</dbReference>
<dbReference type="GO" id="GO:0005694">
    <property type="term" value="C:chromosome"/>
    <property type="evidence" value="ECO:0000314"/>
    <property type="project" value="UniProtKB"/>
</dbReference>
<dbReference type="GO" id="GO:0005794">
    <property type="term" value="C:Golgi apparatus"/>
    <property type="evidence" value="ECO:0000314"/>
    <property type="project" value="HPA"/>
</dbReference>
<dbReference type="GO" id="GO:0005654">
    <property type="term" value="C:nucleoplasm"/>
    <property type="evidence" value="ECO:0000314"/>
    <property type="project" value="HPA"/>
</dbReference>
<dbReference type="GO" id="GO:0005634">
    <property type="term" value="C:nucleus"/>
    <property type="evidence" value="ECO:0000318"/>
    <property type="project" value="GO_Central"/>
</dbReference>
<dbReference type="GO" id="GO:0005721">
    <property type="term" value="C:pericentric heterochromatin"/>
    <property type="evidence" value="ECO:0007669"/>
    <property type="project" value="Ensembl"/>
</dbReference>
<dbReference type="GO" id="GO:0035861">
    <property type="term" value="C:site of double-strand break"/>
    <property type="evidence" value="ECO:0007669"/>
    <property type="project" value="Ensembl"/>
</dbReference>
<dbReference type="GO" id="GO:0001741">
    <property type="term" value="C:XY body"/>
    <property type="evidence" value="ECO:0007669"/>
    <property type="project" value="Ensembl"/>
</dbReference>
<dbReference type="GO" id="GO:0016407">
    <property type="term" value="F:acetyltransferase activity"/>
    <property type="evidence" value="ECO:0000314"/>
    <property type="project" value="UniProtKB"/>
</dbReference>
<dbReference type="GO" id="GO:0004468">
    <property type="term" value="F:L-lysine N-acetyltransferase activity, acting on acetyl phosphate as donor"/>
    <property type="evidence" value="ECO:0007669"/>
    <property type="project" value="Ensembl"/>
</dbReference>
<dbReference type="GO" id="GO:0008080">
    <property type="term" value="F:N-acetyltransferase activity"/>
    <property type="evidence" value="ECO:0000304"/>
    <property type="project" value="Reactome"/>
</dbReference>
<dbReference type="GO" id="GO:0061733">
    <property type="term" value="F:protein-lysine-acetyltransferase activity"/>
    <property type="evidence" value="ECO:0000318"/>
    <property type="project" value="GO_Central"/>
</dbReference>
<dbReference type="GO" id="GO:0008270">
    <property type="term" value="F:zinc ion binding"/>
    <property type="evidence" value="ECO:0007669"/>
    <property type="project" value="UniProtKB-KW"/>
</dbReference>
<dbReference type="GO" id="GO:0007059">
    <property type="term" value="P:chromosome segregation"/>
    <property type="evidence" value="ECO:0007669"/>
    <property type="project" value="Ensembl"/>
</dbReference>
<dbReference type="GO" id="GO:0006302">
    <property type="term" value="P:double-strand break repair"/>
    <property type="evidence" value="ECO:0007669"/>
    <property type="project" value="Ensembl"/>
</dbReference>
<dbReference type="GO" id="GO:0002244">
    <property type="term" value="P:hematopoietic progenitor cell differentiation"/>
    <property type="evidence" value="ECO:0007669"/>
    <property type="project" value="Ensembl"/>
</dbReference>
<dbReference type="GO" id="GO:0007064">
    <property type="term" value="P:mitotic sister chromatid cohesion"/>
    <property type="evidence" value="ECO:0000318"/>
    <property type="project" value="GO_Central"/>
</dbReference>
<dbReference type="GO" id="GO:0034421">
    <property type="term" value="P:post-translational protein acetylation"/>
    <property type="evidence" value="ECO:0000315"/>
    <property type="project" value="UniProtKB"/>
</dbReference>
<dbReference type="GO" id="GO:0071168">
    <property type="term" value="P:protein localization to chromatin"/>
    <property type="evidence" value="ECO:0007669"/>
    <property type="project" value="Ensembl"/>
</dbReference>
<dbReference type="GO" id="GO:0006275">
    <property type="term" value="P:regulation of DNA replication"/>
    <property type="evidence" value="ECO:0000315"/>
    <property type="project" value="UniProtKB"/>
</dbReference>
<dbReference type="GO" id="GO:0007062">
    <property type="term" value="P:sister chromatid cohesion"/>
    <property type="evidence" value="ECO:0000304"/>
    <property type="project" value="Reactome"/>
</dbReference>
<dbReference type="InterPro" id="IPR028005">
    <property type="entry name" value="AcTrfase_ESCO_Znf_dom"/>
</dbReference>
<dbReference type="InterPro" id="IPR028009">
    <property type="entry name" value="ESCO_Acetyltransf_dom"/>
</dbReference>
<dbReference type="PANTHER" id="PTHR45884">
    <property type="entry name" value="N-ACETYLTRANSFERASE ECO"/>
    <property type="match status" value="1"/>
</dbReference>
<dbReference type="PANTHER" id="PTHR45884:SF3">
    <property type="entry name" value="N-ACETYLTRANSFERASE ESCO2"/>
    <property type="match status" value="1"/>
</dbReference>
<dbReference type="Pfam" id="PF13880">
    <property type="entry name" value="Acetyltransf_13"/>
    <property type="match status" value="1"/>
</dbReference>
<dbReference type="Pfam" id="PF13878">
    <property type="entry name" value="zf-C2H2_3"/>
    <property type="match status" value="1"/>
</dbReference>
<gene>
    <name evidence="12" type="primary">ESCO2</name>
</gene>
<name>ESCO2_HUMAN</name>
<evidence type="ECO:0000256" key="1">
    <source>
        <dbReference type="SAM" id="MobiDB-lite"/>
    </source>
</evidence>
<evidence type="ECO:0000269" key="2">
    <source>
    </source>
</evidence>
<evidence type="ECO:0000269" key="3">
    <source>
    </source>
</evidence>
<evidence type="ECO:0000269" key="4">
    <source>
    </source>
</evidence>
<evidence type="ECO:0000269" key="5">
    <source>
    </source>
</evidence>
<evidence type="ECO:0000269" key="6">
    <source>
    </source>
</evidence>
<evidence type="ECO:0000269" key="7">
    <source>
    </source>
</evidence>
<evidence type="ECO:0000269" key="8">
    <source>
    </source>
</evidence>
<evidence type="ECO:0000303" key="9">
    <source>
    </source>
</evidence>
<evidence type="ECO:0000303" key="10">
    <source>
    </source>
</evidence>
<evidence type="ECO:0000305" key="11"/>
<evidence type="ECO:0000312" key="12">
    <source>
        <dbReference type="HGNC" id="HGNC:27230"/>
    </source>
</evidence>
<evidence type="ECO:0007744" key="13">
    <source>
    </source>
</evidence>
<evidence type="ECO:0007744" key="14">
    <source>
    </source>
</evidence>
<evidence type="ECO:0007744" key="15">
    <source>
    </source>
</evidence>
<evidence type="ECO:0007744" key="16">
    <source>
    </source>
</evidence>
<accession>Q56NI9</accession>
<accession>B3KW59</accession>
<accession>Q49AP4</accession>
<keyword id="KW-0012">Acyltransferase</keyword>
<keyword id="KW-0025">Alternative splicing</keyword>
<keyword id="KW-0131">Cell cycle</keyword>
<keyword id="KW-0158">Chromosome</keyword>
<keyword id="KW-0225">Disease variant</keyword>
<keyword id="KW-0242">Dwarfism</keyword>
<keyword id="KW-0991">Intellectual disability</keyword>
<keyword id="KW-0479">Metal-binding</keyword>
<keyword id="KW-0539">Nucleus</keyword>
<keyword id="KW-0597">Phosphoprotein</keyword>
<keyword id="KW-1267">Proteomics identification</keyword>
<keyword id="KW-1185">Reference proteome</keyword>
<keyword id="KW-0808">Transferase</keyword>
<keyword id="KW-0862">Zinc</keyword>
<keyword id="KW-0863">Zinc-finger</keyword>
<comment type="function">
    <text evidence="2 3 5 6">Acetyltransferase required for the establishment of sister chromatid cohesion (PubMed:15821733, PubMed:15958495). Couples the processes of cohesion and DNA replication to ensure that only sister chromatids become paired together. In contrast to the structural cohesins, the deposition and establishment factors are required only during the S phase. Acetylates the cohesin component SMC3 (PubMed:21111234).</text>
</comment>
<comment type="catalytic activity">
    <reaction evidence="3">
        <text>L-lysyl-[protein] + acetyl-CoA = N(6)-acetyl-L-lysyl-[protein] + CoA + H(+)</text>
        <dbReference type="Rhea" id="RHEA:45948"/>
        <dbReference type="Rhea" id="RHEA-COMP:9752"/>
        <dbReference type="Rhea" id="RHEA-COMP:10731"/>
        <dbReference type="ChEBI" id="CHEBI:15378"/>
        <dbReference type="ChEBI" id="CHEBI:29969"/>
        <dbReference type="ChEBI" id="CHEBI:57287"/>
        <dbReference type="ChEBI" id="CHEBI:57288"/>
        <dbReference type="ChEBI" id="CHEBI:61930"/>
    </reaction>
</comment>
<comment type="interaction">
    <interactant intactId="EBI-3951849">
        <id>Q56NI9</id>
    </interactant>
    <interactant intactId="EBI-11022345">
        <id>P51114-2</id>
        <label>FXR1</label>
    </interactant>
    <organismsDiffer>false</organismsDiffer>
    <experiments>3</experiments>
</comment>
<comment type="interaction">
    <interactant intactId="EBI-3951849">
        <id>Q56NI9</id>
    </interactant>
    <interactant intactId="EBI-618309">
        <id>Q08379</id>
        <label>GOLGA2</label>
    </interactant>
    <organismsDiffer>false</organismsDiffer>
    <experiments>3</experiments>
</comment>
<comment type="interaction">
    <interactant intactId="EBI-3951849">
        <id>Q56NI9</id>
    </interactant>
    <interactant intactId="EBI-79165">
        <id>Q9NRD5</id>
        <label>PICK1</label>
    </interactant>
    <organismsDiffer>false</organismsDiffer>
    <experiments>3</experiments>
</comment>
<comment type="interaction">
    <interactant intactId="EBI-3951849">
        <id>Q56NI9</id>
    </interactant>
    <interactant intactId="EBI-447043">
        <id>Q15276</id>
        <label>RABEP1</label>
    </interactant>
    <organismsDiffer>false</organismsDiffer>
    <experiments>3</experiments>
</comment>
<comment type="subcellular location">
    <subcellularLocation>
        <location evidence="3 5">Nucleus</location>
    </subcellularLocation>
    <subcellularLocation>
        <location evidence="3 5">Chromosome</location>
    </subcellularLocation>
    <text evidence="3">Nuclear in interphase cells, excluded from chromosomes during metaphase but reassociates with chromosomes in telophase.</text>
</comment>
<comment type="alternative products">
    <event type="alternative splicing"/>
    <isoform>
        <id>Q56NI9-1</id>
        <name>1</name>
        <sequence type="displayed"/>
    </isoform>
    <isoform>
        <id>Q56NI9-2</id>
        <name>2</name>
        <sequence type="described" ref="VSP_055773 VSP_055774"/>
    </isoform>
</comment>
<comment type="tissue specificity">
    <text evidence="2">Widely expressed in fetal tissues. In adult, it is expressed in thymus, placenta and small intestine.</text>
</comment>
<comment type="developmental stage">
    <text evidence="3">Cell-cycle regulated. Down-regulated when cells enter M phase. Expression increases again when cells enter S phase of the next cell cycle.</text>
</comment>
<comment type="domain">
    <text evidence="3">The N-terminal region seems to be responsible for association with chromosomes, thus excluding any involvement of the Zn finger in this process.</text>
</comment>
<comment type="disease" evidence="2 4">
    <disease id="DI-02272">
        <name>Roberts-SC phocomelia syndrome</name>
        <acronym>RBS</acronym>
        <description>An autosomal recessive disorder characterized by pre- and postnatal growth retardation, intellectual disability, microcephaly, bilateral cleft lip and cleft palate, and mesomelic symmetric limb reduction. Severely affected infants may be stillborn or die shortly after birth. Patient chromosomes have a lack of cohesion involving heterochromatic C-banding regions around centromeres and the heterochromatin regions on the 1, 9, 16, and Y chromosomes. These findings are referred to as premature centromere separation (PCS) and heterochromatin repulsion (HR), and they are important for the diagnosis of the syndrome.</description>
        <dbReference type="MIM" id="268300"/>
    </disease>
    <text>The disease is caused by variants affecting the gene represented in this entry.</text>
</comment>
<comment type="disease" evidence="7 8">
    <disease id="DI-06066">
        <name>Juberg-Hayward syndrome</name>
        <acronym>JHS</acronym>
        <description>An autosomal recessive syndrome characterized by cleft lip/palate, microcephaly, ptosis, hypoplasia or aplasia of thumbs, short stature, dislocation of radial head, and fusion of humerus and radius leading to elbow restriction.</description>
        <dbReference type="MIM" id="216100"/>
    </disease>
    <text>The disease is caused by variants affecting the gene represented in this entry.</text>
</comment>
<comment type="similarity">
    <text evidence="11">Belongs to the acetyltransferase family. ECO subfamily.</text>
</comment>